<gene>
    <name type="primary">Mxd4</name>
    <name type="synonym">Mad4</name>
</gene>
<accession>Q60948</accession>
<comment type="function">
    <text evidence="4">Transcriptional repressor. Binds with MAX to form a sequence-specific DNA-binding protein complex which recognizes the core sequence 5'-CAC[GA]TG-3'. Antagonizes MYC transcriptional activity by competing for MAX and suppresses MYC dependent cell transformation.</text>
</comment>
<comment type="subunit">
    <text evidence="3 4">Efficient DNA binding requires dimerization with another bHLH protein. Binds DNA as a heterodimer with MAX. Interacts with SIN3A AND SIN3B. Interacts with RNF17.</text>
</comment>
<comment type="subcellular location">
    <subcellularLocation>
        <location>Nucleus</location>
    </subcellularLocation>
</comment>
<comment type="developmental stage">
    <text evidence="4">Expressed during neural and epidermal differentiation. Primarily expressed in growth-arrested differentiating cells. In the spinal cord at embryonic day 10.5, a strong expression seen in the differentiating cells of the intermediate zone at the ventral part of the neural tube and weakly in the ventricular zone. At 11.5 and 12.5 dpc, highly expressed in the intermediate zone and at reduced levels in the ventricular zone that mostly persists in the dorsal part of the neural tube. At 14.5 dpc, expressed throughout the spinal cord. In the developing epidermis, expressed in the dermis, hair follicles and in some differentiating cells in the upper layers of the epidermis.</text>
</comment>
<sequence>MELNSLLLLLEAAEYLERRDREAEHGYASMLPFDGDFARKKTKTAGLVRKGPNNRSSHNELEKHRRAKLRLYLEQLKQLGPLGPDSTRHTTLSLLKRAKMHIKKLEEQDRRALSIKEQLQREHRFLKRRLEQLSVQSVERVRTDSTGSAVSTDDSEQEVDIEGMEFGPGELDSAGSSSDADDHYSLQSSGCSDSSYGHPCRRPGCPGLS</sequence>
<reference key="1">
    <citation type="journal article" date="1995" name="EMBO J.">
        <title>Mad3 and Mad4: novel Max-interacting transcriptional repressors that suppress c-myc dependent transformation and are expressed during neural and epidermal differentiation.</title>
        <authorList>
            <person name="Hurlin P.J."/>
            <person name="Queva C."/>
            <person name="Koskinen P.J."/>
            <person name="Steingrimsson E."/>
            <person name="Ayer D.E."/>
            <person name="Copeland N.G."/>
            <person name="Jenkins N.A."/>
            <person name="Eisenman R.N."/>
        </authorList>
    </citation>
    <scope>NUCLEOTIDE SEQUENCE [MRNA]</scope>
    <scope>FUNCTION</scope>
    <scope>DEVELOPMENTAL STAGE</scope>
    <scope>SUBUNIT</scope>
    <scope>INTERACTION WITH SIN3A AND SIN3B</scope>
    <source>
        <strain>AB1</strain>
        <tissue>Embryonic stem cell</tissue>
    </source>
</reference>
<reference key="2">
    <citation type="journal article" date="1996" name="EMBO J.">
        <authorList>
            <person name="Hurlin P.J."/>
            <person name="Queva C."/>
            <person name="Koskinen P.J."/>
            <person name="Steingrimsson E."/>
            <person name="Ayer D.E."/>
            <person name="Copeland N.G."/>
            <person name="Jenkins N.A."/>
            <person name="Eisenman R.N."/>
        </authorList>
    </citation>
    <scope>ERRATUM OF PUBMED:8521822</scope>
</reference>
<reference key="3">
    <citation type="journal article" date="1999" name="Oncogene">
        <title>Mmip-2, a novel RING finger protein that interacts with mad members of the Myc oncoprotein network.</title>
        <authorList>
            <person name="Yin X.-Y."/>
            <person name="Gupta K."/>
            <person name="Prochownik E.V."/>
        </authorList>
    </citation>
    <scope>INTERACTION WITH RNF17</scope>
</reference>
<dbReference type="EMBL" id="U32395">
    <property type="protein sequence ID" value="AAB02795.1"/>
    <property type="molecule type" value="mRNA"/>
</dbReference>
<dbReference type="CCDS" id="CCDS19212.1"/>
<dbReference type="SMR" id="Q60948"/>
<dbReference type="FunCoup" id="Q60948">
    <property type="interactions" value="894"/>
</dbReference>
<dbReference type="STRING" id="10090.ENSMUSP00000039071"/>
<dbReference type="PhosphoSitePlus" id="Q60948"/>
<dbReference type="PaxDb" id="10090-ENSMUSP00000039071"/>
<dbReference type="ProteomicsDB" id="295760"/>
<dbReference type="AGR" id="MGI:104991"/>
<dbReference type="MGI" id="MGI:104991">
    <property type="gene designation" value="Mxd4"/>
</dbReference>
<dbReference type="eggNOG" id="KOG2483">
    <property type="taxonomic scope" value="Eukaryota"/>
</dbReference>
<dbReference type="InParanoid" id="Q60948"/>
<dbReference type="ChiTaRS" id="Mxd4">
    <property type="organism name" value="mouse"/>
</dbReference>
<dbReference type="PRO" id="PR:Q60948"/>
<dbReference type="Proteomes" id="UP000000589">
    <property type="component" value="Unplaced"/>
</dbReference>
<dbReference type="RNAct" id="Q60948">
    <property type="molecule type" value="protein"/>
</dbReference>
<dbReference type="GO" id="GO:0090575">
    <property type="term" value="C:RNA polymerase II transcription regulator complex"/>
    <property type="evidence" value="ECO:0000315"/>
    <property type="project" value="NTNU_SB"/>
</dbReference>
<dbReference type="GO" id="GO:0003677">
    <property type="term" value="F:DNA binding"/>
    <property type="evidence" value="ECO:0007669"/>
    <property type="project" value="UniProtKB-KW"/>
</dbReference>
<dbReference type="GO" id="GO:0046983">
    <property type="term" value="F:protein dimerization activity"/>
    <property type="evidence" value="ECO:0007669"/>
    <property type="project" value="InterPro"/>
</dbReference>
<dbReference type="GO" id="GO:0045892">
    <property type="term" value="P:negative regulation of DNA-templated transcription"/>
    <property type="evidence" value="ECO:0000316"/>
    <property type="project" value="MGI"/>
</dbReference>
<dbReference type="GO" id="GO:0000122">
    <property type="term" value="P:negative regulation of transcription by RNA polymerase II"/>
    <property type="evidence" value="ECO:0000314"/>
    <property type="project" value="NTNU_SB"/>
</dbReference>
<dbReference type="CDD" id="cd18929">
    <property type="entry name" value="bHLHzip_Mad4"/>
    <property type="match status" value="1"/>
</dbReference>
<dbReference type="FunFam" id="4.10.280.10:FF:000014">
    <property type="entry name" value="Max dimerization protein 1"/>
    <property type="match status" value="1"/>
</dbReference>
<dbReference type="Gene3D" id="4.10.280.10">
    <property type="entry name" value="Helix-loop-helix DNA-binding domain"/>
    <property type="match status" value="1"/>
</dbReference>
<dbReference type="InterPro" id="IPR011598">
    <property type="entry name" value="bHLH_dom"/>
</dbReference>
<dbReference type="InterPro" id="IPR036638">
    <property type="entry name" value="HLH_DNA-bd_sf"/>
</dbReference>
<dbReference type="PANTHER" id="PTHR11969:SF4">
    <property type="entry name" value="MAX DIMERIZATION PROTEIN 4"/>
    <property type="match status" value="1"/>
</dbReference>
<dbReference type="PANTHER" id="PTHR11969">
    <property type="entry name" value="MAX DIMERIZATION, MAD"/>
    <property type="match status" value="1"/>
</dbReference>
<dbReference type="Pfam" id="PF00010">
    <property type="entry name" value="HLH"/>
    <property type="match status" value="1"/>
</dbReference>
<dbReference type="SMART" id="SM00353">
    <property type="entry name" value="HLH"/>
    <property type="match status" value="1"/>
</dbReference>
<dbReference type="SUPFAM" id="SSF47459">
    <property type="entry name" value="HLH, helix-loop-helix DNA-binding domain"/>
    <property type="match status" value="1"/>
</dbReference>
<dbReference type="PROSITE" id="PS50888">
    <property type="entry name" value="BHLH"/>
    <property type="match status" value="1"/>
</dbReference>
<protein>
    <recommendedName>
        <fullName>Max dimerization protein 4</fullName>
        <shortName>Max dimerizer 4</shortName>
    </recommendedName>
    <alternativeName>
        <fullName>Max-associated protein 4</fullName>
    </alternativeName>
    <alternativeName>
        <fullName>Max-interacting transcriptional repressor MAD4</fullName>
    </alternativeName>
</protein>
<evidence type="ECO:0000255" key="1">
    <source>
        <dbReference type="PROSITE-ProRule" id="PRU00981"/>
    </source>
</evidence>
<evidence type="ECO:0000256" key="2">
    <source>
        <dbReference type="SAM" id="MobiDB-lite"/>
    </source>
</evidence>
<evidence type="ECO:0000269" key="3">
    <source>
    </source>
</evidence>
<evidence type="ECO:0000269" key="4">
    <source>
    </source>
</evidence>
<name>MAD4_MOUSE</name>
<organism>
    <name type="scientific">Mus musculus</name>
    <name type="common">Mouse</name>
    <dbReference type="NCBI Taxonomy" id="10090"/>
    <lineage>
        <taxon>Eukaryota</taxon>
        <taxon>Metazoa</taxon>
        <taxon>Chordata</taxon>
        <taxon>Craniata</taxon>
        <taxon>Vertebrata</taxon>
        <taxon>Euteleostomi</taxon>
        <taxon>Mammalia</taxon>
        <taxon>Eutheria</taxon>
        <taxon>Euarchontoglires</taxon>
        <taxon>Glires</taxon>
        <taxon>Rodentia</taxon>
        <taxon>Myomorpha</taxon>
        <taxon>Muroidea</taxon>
        <taxon>Muridae</taxon>
        <taxon>Murinae</taxon>
        <taxon>Mus</taxon>
        <taxon>Mus</taxon>
    </lineage>
</organism>
<feature type="chain" id="PRO_0000127267" description="Max dimerization protein 4">
    <location>
        <begin position="1"/>
        <end position="209"/>
    </location>
</feature>
<feature type="domain" description="bHLH" evidence="1">
    <location>
        <begin position="53"/>
        <end position="105"/>
    </location>
</feature>
<feature type="region of interest" description="Interaction with SIN3A and SIN3B" evidence="4">
    <location>
        <begin position="6"/>
        <end position="23"/>
    </location>
</feature>
<feature type="region of interest" description="Disordered" evidence="2">
    <location>
        <begin position="137"/>
        <end position="209"/>
    </location>
</feature>
<feature type="compositionally biased region" description="Acidic residues" evidence="2">
    <location>
        <begin position="153"/>
        <end position="163"/>
    </location>
</feature>
<feature type="compositionally biased region" description="Polar residues" evidence="2">
    <location>
        <begin position="185"/>
        <end position="195"/>
    </location>
</feature>
<keyword id="KW-0238">DNA-binding</keyword>
<keyword id="KW-0539">Nucleus</keyword>
<keyword id="KW-1185">Reference proteome</keyword>
<keyword id="KW-0678">Repressor</keyword>
<keyword id="KW-0804">Transcription</keyword>
<keyword id="KW-0805">Transcription regulation</keyword>
<proteinExistence type="evidence at protein level"/>